<organismHost>
    <name type="scientific">Homo sapiens</name>
    <name type="common">Human</name>
    <dbReference type="NCBI Taxonomy" id="9606"/>
</organismHost>
<comment type="function">
    <text evidence="3 4">Promotes alternative splicing of late transcripts by promoting splicing at weak 3' splice sites. Required for the temporal activation of major late pre-mRNA splicing at late times of infection. Induces the splicing and expression of the late capsid vertex protein.</text>
</comment>
<comment type="function">
    <text evidence="1">Probably functions as the small terminase that is part of the molecular motor that translocates genomic DNA in empty capsid during DNA packaging. This motor is located at a unique vertex and comprises at least the IVa2 ATPase, the small terminase 33K and probably a portal. Forms a ring-like structure of about 17 nm in which genomic DNA is translocated into the capsid. Stimulates IVa2 ATPase activity in the presence of the viral genome. Once the DNA is packaged, the terminase detaches: the 33K protein is present in the empty particles, but not in the mature virions. Also involved in virion assembly.</text>
</comment>
<comment type="subunit">
    <text evidence="1">Homooligomer. Interacts with DBP; this interaction occurs at a unique vertex during genome packaging. Interacts with IVa2; this interaction occurs at a unique vertex during genome packaging and seems to potentiate IVa2 and 33K oligomerization.</text>
</comment>
<comment type="subcellular location">
    <subcellularLocation>
        <location evidence="6">Host nucleus</location>
    </subcellularLocation>
    <text evidence="6">At late time of infection, reorganized from the nuclear margin to ring-like structures at viral replication centers.</text>
</comment>
<comment type="alternative products">
    <event type="alternative splicing"/>
    <isoform>
        <id>P24939-1</id>
        <name>Protein 33K</name>
        <name>Splicing factor 33K</name>
        <name>L4-33K</name>
        <sequence type="displayed"/>
    </isoform>
    <isoform>
        <id>P0DJX1-1</id>
        <name>Packaging protein 2</name>
        <name>Packaging protein 22K</name>
        <name>L4-22K</name>
        <sequence type="external"/>
    </isoform>
</comment>
<comment type="induction">
    <text>Expressed in the late phase of the viral replicative cycle.</text>
</comment>
<comment type="domain">
    <text>The tiny Arg-Ser repeat region (RS repeat) is necessary for the splicing enhancer function.</text>
</comment>
<comment type="PTM">
    <text evidence="5">Phosphorylated in vitro by human PKA and PRKDC. PRKDC inhibits, whereas PKA activates the splicing factor.</text>
</comment>
<comment type="miscellaneous">
    <text>All late proteins expressed from the major late promoter are produced by alternative splicing and alternative polyadenylation of the same gene giving rise to non-overlapping ORFs. Expression of packaging protein 2 and splicing factor is controlled by a L4 promoter distinct from the major late promoter.</text>
</comment>
<comment type="miscellaneous">
    <molecule>Isoform Protein 33K</molecule>
    <text>Spliced isoform.</text>
</comment>
<comment type="similarity">
    <text evidence="8">Belongs to the adenoviridae splicing factor family.</text>
</comment>
<feature type="chain" id="PRO_0000221911" description="Protein 33K">
    <location>
        <begin position="1"/>
        <end position="228"/>
    </location>
</feature>
<feature type="region of interest" description="Disordered" evidence="2">
    <location>
        <begin position="1"/>
        <end position="156"/>
    </location>
</feature>
<feature type="region of interest" description="Necessary for nuclear subcellular location">
    <location>
        <begin position="171"/>
        <end position="198"/>
    </location>
</feature>
<feature type="region of interest" description="RS-repeat; required for splicing enhancer activity">
    <location>
        <begin position="177"/>
        <end position="197"/>
    </location>
</feature>
<feature type="compositionally biased region" description="Acidic residues" evidence="2">
    <location>
        <begin position="15"/>
        <end position="53"/>
    </location>
</feature>
<feature type="compositionally biased region" description="Low complexity" evidence="2">
    <location>
        <begin position="54"/>
        <end position="63"/>
    </location>
</feature>
<feature type="compositionally biased region" description="Low complexity" evidence="2">
    <location>
        <begin position="104"/>
        <end position="119"/>
    </location>
</feature>
<feature type="mutagenesis site" description="No effect on nuclear subcellular location. No effect on splicing enhancer activity." evidence="3 6">
    <original>S</original>
    <variation>G</variation>
    <location>
        <position position="177"/>
    </location>
</feature>
<feature type="mutagenesis site" description="No effect on nuclear subcellular location. No effect on splicing enhancer activity." evidence="3 6">
    <original>S</original>
    <variation>G</variation>
    <location>
        <position position="190"/>
    </location>
</feature>
<feature type="mutagenesis site" description="50% redistribution of subcellular location to the cytoplasm. Complete loss of splicing enhancer activity. Loss of colocalization in viral replication centers." evidence="3 6">
    <original>S</original>
    <variation>G</variation>
    <location>
        <position position="193"/>
    </location>
</feature>
<feature type="mutagenesis site" description="No effect on nuclear subcellular location. No effect on splicing enhancer activity." evidence="3 6">
    <original>S</original>
    <variation>G</variation>
    <location>
        <position position="197"/>
    </location>
</feature>
<name>SF33K_ADE02</name>
<organism>
    <name type="scientific">Human adenovirus C serotype 2</name>
    <name type="common">HAdV-2</name>
    <name type="synonym">Human adenovirus 2</name>
    <dbReference type="NCBI Taxonomy" id="10515"/>
    <lineage>
        <taxon>Viruses</taxon>
        <taxon>Varidnaviria</taxon>
        <taxon>Bamfordvirae</taxon>
        <taxon>Preplasmiviricota</taxon>
        <taxon>Tectiliviricetes</taxon>
        <taxon>Rowavirales</taxon>
        <taxon>Adenoviridae</taxon>
        <taxon>Mastadenovirus</taxon>
        <taxon>Human mastadenovirus C</taxon>
    </lineage>
</organism>
<sequence length="228" mass="25023">MAPKKKLQLPPPPPTDEEEYWDSQAEEVLDEEEEMMEDWDSLDEASEAEEVSDETPSPSVAFPSPAPQKLATVPSIATTSAPQAPPALPVRRPNRRWDTTGTRAAPTAPAAAAAAATAAVTQKQRRPDSKTLTKPKKSTAAAAAGGGALRLAPNEPVSTRELRNRIFPTLYAIFQQSRGQEQELKIKNRSLRSLTRSCLYHKSEDQLRRTLEDAEALFSKYCALTLKD</sequence>
<accession>P24939</accession>
<keyword id="KW-0025">Alternative splicing</keyword>
<keyword id="KW-1048">Host nucleus</keyword>
<keyword id="KW-0945">Host-virus interaction</keyword>
<keyword id="KW-0426">Late protein</keyword>
<keyword id="KW-0507">mRNA processing</keyword>
<keyword id="KW-0508">mRNA splicing</keyword>
<keyword id="KW-0597">Phosphoprotein</keyword>
<keyword id="KW-1185">Reference proteome</keyword>
<keyword id="KW-0118">Viral capsid assembly</keyword>
<keyword id="KW-0231">Viral genome packaging</keyword>
<keyword id="KW-1188">Viral release from host cell</keyword>
<gene>
    <name type="ORF">L4</name>
</gene>
<reference key="1">
    <citation type="journal article" date="1979" name="Gene">
        <title>Nucleotide sequence of the EcoRI-F fragment of adenovirus 2 genome.</title>
        <authorList>
            <person name="Galibert F."/>
            <person name="Herisse J."/>
            <person name="Courtois G."/>
        </authorList>
    </citation>
    <scope>NUCLEOTIDE SEQUENCE [GENOMIC DNA]</scope>
</reference>
<reference key="2">
    <citation type="journal article" date="1983" name="J. Virol.">
        <title>Polypeptide structure and encoding location of the adenovirus serotype 2 late, nonstructural 33K protein.</title>
        <authorList>
            <person name="Oosterom-Dragon E.A."/>
            <person name="Anderson C.W."/>
        </authorList>
    </citation>
    <scope>IDENTIFICATION</scope>
</reference>
<reference key="3">
    <citation type="journal article" date="2012" name="Nat. Methods">
        <title>De novo derivation of proteomes from transcriptomes for transcript and protein identification.</title>
        <authorList>
            <person name="Evans V.C."/>
            <person name="Barker G."/>
            <person name="Heesom K.J."/>
            <person name="Fan J."/>
            <person name="Bessant C."/>
            <person name="Matthews D.A."/>
        </authorList>
    </citation>
    <scope>IDENTIFICATION</scope>
    <source>
        <strain>Human adenovirus C serotype 5</strain>
    </source>
</reference>
<reference key="4">
    <citation type="journal article" date="2006" name="J. Biol. Chem.">
        <title>L4-33K, an adenovirus-encoded alternative RNA splicing factor.</title>
        <authorList>
            <person name="Tormanen H."/>
            <person name="Backstrom E."/>
            <person name="Carlsson A."/>
            <person name="Akusjarvi G."/>
        </authorList>
    </citation>
    <scope>FUNCTION</scope>
    <scope>MUTAGENESIS OF SER-177; SER-190; SER-193 AND SER-197</scope>
    <source>
        <strain>Human adenovirus C serotype 5</strain>
    </source>
</reference>
<reference key="5">
    <citation type="journal article" date="2008" name="Front. Biosci.">
        <title>Temporal regulation of adenovirus major late alternative RNA splicing.</title>
        <authorList>
            <person name="Akusjarvi G."/>
        </authorList>
    </citation>
    <scope>REVIEW</scope>
    <scope>ALTERNATIVE SPLICING</scope>
</reference>
<reference key="6">
    <citation type="journal article" date="2009" name="J. Virol.">
        <title>Adenovirus serotype 5 L4-22K and L4-33K proteins have distinct functions in regulating late gene expression.</title>
        <authorList>
            <person name="Morris S.J."/>
            <person name="Leppard K.N."/>
        </authorList>
    </citation>
    <scope>FUNCTION</scope>
    <source>
        <strain>Human adenovirus C serotype 5</strain>
    </source>
</reference>
<reference key="7">
    <citation type="journal article" date="2012" name="PLoS ONE">
        <title>Two cellular protein kinases, DNA-PK and PKA, phosphorylate the adenoviral L4-33K protein and have opposite effects on L1 alternative RNA splicing.</title>
        <authorList>
            <person name="Tormanen Persson H."/>
            <person name="Aksaas A.K."/>
            <person name="Kvissel A.K."/>
            <person name="Punga T."/>
            <person name="Engstrom A."/>
            <person name="Skalhegg B.S."/>
            <person name="Akusjarvi G."/>
        </authorList>
    </citation>
    <scope>PHOSPHORYLATION</scope>
    <scope>INTERACTION WITH HOST PKA AND PRKDC</scope>
</reference>
<reference key="8">
    <citation type="journal article" date="2012" name="Virology">
        <title>Serine 192 in the tiny RS repeat of the adenoviral L4-33K splicing enhancer protein is essential for function and reorganization of the protein to the periphery of viral replication centers.</title>
        <authorList>
            <person name="Ostberg S."/>
            <person name="Tormanen Persson H."/>
            <person name="Akusjarvi G."/>
        </authorList>
    </citation>
    <scope>SUBCELLULAR LOCATION</scope>
    <scope>MUTAGENESIS OF SER-177; SER-190; SER-193 AND SER-197</scope>
    <source>
        <strain>Human adenovirus C serotype 5</strain>
    </source>
</reference>
<protein>
    <recommendedName>
        <fullName evidence="7">Protein 33K</fullName>
        <shortName evidence="8">L4-33K</shortName>
    </recommendedName>
    <alternativeName>
        <fullName>Splicing factor 33K</fullName>
    </alternativeName>
    <alternativeName>
        <fullName evidence="1">Terminase, small subunit</fullName>
    </alternativeName>
</protein>
<proteinExistence type="evidence at protein level"/>
<dbReference type="EMBL" id="J01917">
    <property type="protein sequence ID" value="AAA92219.1"/>
    <property type="molecule type" value="Genomic_DNA"/>
</dbReference>
<dbReference type="RefSeq" id="AP_000179.1">
    <molecule id="P24939-1"/>
    <property type="nucleotide sequence ID" value="AC_000007.1"/>
</dbReference>
<dbReference type="RefSeq" id="NP_040529.1">
    <property type="nucleotide sequence ID" value="NC_001405.1"/>
</dbReference>
<dbReference type="GeneID" id="2653005"/>
<dbReference type="Proteomes" id="UP000008167">
    <property type="component" value="Segment"/>
</dbReference>
<dbReference type="GO" id="GO:0042025">
    <property type="term" value="C:host cell nucleus"/>
    <property type="evidence" value="ECO:0007669"/>
    <property type="project" value="UniProtKB-SubCell"/>
</dbReference>
<dbReference type="GO" id="GO:0006397">
    <property type="term" value="P:mRNA processing"/>
    <property type="evidence" value="ECO:0007669"/>
    <property type="project" value="UniProtKB-KW"/>
</dbReference>
<dbReference type="GO" id="GO:0008380">
    <property type="term" value="P:RNA splicing"/>
    <property type="evidence" value="ECO:0007669"/>
    <property type="project" value="UniProtKB-KW"/>
</dbReference>
<dbReference type="GO" id="GO:0019073">
    <property type="term" value="P:viral DNA genome packaging"/>
    <property type="evidence" value="ECO:0007669"/>
    <property type="project" value="InterPro"/>
</dbReference>
<dbReference type="InterPro" id="IPR021304">
    <property type="entry name" value="Adeno_L4-33K/L4-22K"/>
</dbReference>
<dbReference type="Pfam" id="PF11081">
    <property type="entry name" value="Adeno_L433K_22K"/>
    <property type="match status" value="1"/>
</dbReference>
<evidence type="ECO:0000250" key="1">
    <source>
        <dbReference type="UniProtKB" id="P24940"/>
    </source>
</evidence>
<evidence type="ECO:0000256" key="2">
    <source>
        <dbReference type="SAM" id="MobiDB-lite"/>
    </source>
</evidence>
<evidence type="ECO:0000269" key="3">
    <source>
    </source>
</evidence>
<evidence type="ECO:0000269" key="4">
    <source>
    </source>
</evidence>
<evidence type="ECO:0000269" key="5">
    <source>
    </source>
</evidence>
<evidence type="ECO:0000269" key="6">
    <source>
    </source>
</evidence>
<evidence type="ECO:0000303" key="7">
    <source>
    </source>
</evidence>
<evidence type="ECO:0000305" key="8"/>